<accession>Q6F0E1</accession>
<reference key="1">
    <citation type="submission" date="2004-06" db="EMBL/GenBank/DDBJ databases">
        <authorList>
            <person name="Birren B.W."/>
            <person name="Stange-Thomann N."/>
            <person name="Hafez N."/>
            <person name="DeCaprio D."/>
            <person name="Fisher S."/>
            <person name="Butler J."/>
            <person name="Elkins T."/>
            <person name="Kodira C.D."/>
            <person name="Major J."/>
            <person name="Wang S."/>
            <person name="Nicol R."/>
            <person name="Nusbaum C."/>
        </authorList>
    </citation>
    <scope>NUCLEOTIDE SEQUENCE [LARGE SCALE GENOMIC DNA]</scope>
    <source>
        <strain>ATCC 33453 / NBRC 100688 / NCTC 11704 / L1</strain>
    </source>
</reference>
<name>KTHY_MESFL</name>
<keyword id="KW-0067">ATP-binding</keyword>
<keyword id="KW-0418">Kinase</keyword>
<keyword id="KW-0545">Nucleotide biosynthesis</keyword>
<keyword id="KW-0547">Nucleotide-binding</keyword>
<keyword id="KW-1185">Reference proteome</keyword>
<keyword id="KW-0808">Transferase</keyword>
<dbReference type="EC" id="2.7.4.9" evidence="1"/>
<dbReference type="EMBL" id="AE017263">
    <property type="protein sequence ID" value="AAT76032.1"/>
    <property type="molecule type" value="Genomic_DNA"/>
</dbReference>
<dbReference type="RefSeq" id="WP_011183572.1">
    <property type="nucleotide sequence ID" value="NC_006055.1"/>
</dbReference>
<dbReference type="RefSeq" id="YP_053916.1">
    <property type="nucleotide sequence ID" value="NC_006055.1"/>
</dbReference>
<dbReference type="SMR" id="Q6F0E1"/>
<dbReference type="STRING" id="265311.Mfl676"/>
<dbReference type="PaxDb" id="265311-Mfl676"/>
<dbReference type="EnsemblBacteria" id="AAT76032">
    <property type="protein sequence ID" value="AAT76032"/>
    <property type="gene ID" value="Mfl676"/>
</dbReference>
<dbReference type="GeneID" id="2898171"/>
<dbReference type="KEGG" id="mfl:Mfl676"/>
<dbReference type="PATRIC" id="fig|265311.5.peg.678"/>
<dbReference type="eggNOG" id="COG0125">
    <property type="taxonomic scope" value="Bacteria"/>
</dbReference>
<dbReference type="HOGENOM" id="CLU_049131_0_2_14"/>
<dbReference type="OrthoDB" id="9774907at2"/>
<dbReference type="Proteomes" id="UP000006647">
    <property type="component" value="Chromosome"/>
</dbReference>
<dbReference type="GO" id="GO:0005829">
    <property type="term" value="C:cytosol"/>
    <property type="evidence" value="ECO:0007669"/>
    <property type="project" value="TreeGrafter"/>
</dbReference>
<dbReference type="GO" id="GO:0005524">
    <property type="term" value="F:ATP binding"/>
    <property type="evidence" value="ECO:0007669"/>
    <property type="project" value="UniProtKB-UniRule"/>
</dbReference>
<dbReference type="GO" id="GO:0004798">
    <property type="term" value="F:dTMP kinase activity"/>
    <property type="evidence" value="ECO:0007669"/>
    <property type="project" value="UniProtKB-UniRule"/>
</dbReference>
<dbReference type="GO" id="GO:0006233">
    <property type="term" value="P:dTDP biosynthetic process"/>
    <property type="evidence" value="ECO:0007669"/>
    <property type="project" value="InterPro"/>
</dbReference>
<dbReference type="GO" id="GO:0006235">
    <property type="term" value="P:dTTP biosynthetic process"/>
    <property type="evidence" value="ECO:0007669"/>
    <property type="project" value="UniProtKB-UniRule"/>
</dbReference>
<dbReference type="GO" id="GO:0006227">
    <property type="term" value="P:dUDP biosynthetic process"/>
    <property type="evidence" value="ECO:0007669"/>
    <property type="project" value="TreeGrafter"/>
</dbReference>
<dbReference type="CDD" id="cd01672">
    <property type="entry name" value="TMPK"/>
    <property type="match status" value="1"/>
</dbReference>
<dbReference type="FunFam" id="3.40.50.300:FF:000225">
    <property type="entry name" value="Thymidylate kinase"/>
    <property type="match status" value="1"/>
</dbReference>
<dbReference type="Gene3D" id="3.40.50.300">
    <property type="entry name" value="P-loop containing nucleotide triphosphate hydrolases"/>
    <property type="match status" value="1"/>
</dbReference>
<dbReference type="HAMAP" id="MF_00165">
    <property type="entry name" value="Thymidylate_kinase"/>
    <property type="match status" value="1"/>
</dbReference>
<dbReference type="InterPro" id="IPR027417">
    <property type="entry name" value="P-loop_NTPase"/>
</dbReference>
<dbReference type="InterPro" id="IPR039430">
    <property type="entry name" value="Thymidylate_kin-like_dom"/>
</dbReference>
<dbReference type="InterPro" id="IPR018095">
    <property type="entry name" value="Thymidylate_kin_CS"/>
</dbReference>
<dbReference type="InterPro" id="IPR018094">
    <property type="entry name" value="Thymidylate_kinase"/>
</dbReference>
<dbReference type="NCBIfam" id="TIGR00041">
    <property type="entry name" value="DTMP_kinase"/>
    <property type="match status" value="1"/>
</dbReference>
<dbReference type="PANTHER" id="PTHR10344">
    <property type="entry name" value="THYMIDYLATE KINASE"/>
    <property type="match status" value="1"/>
</dbReference>
<dbReference type="PANTHER" id="PTHR10344:SF4">
    <property type="entry name" value="UMP-CMP KINASE 2, MITOCHONDRIAL"/>
    <property type="match status" value="1"/>
</dbReference>
<dbReference type="Pfam" id="PF02223">
    <property type="entry name" value="Thymidylate_kin"/>
    <property type="match status" value="1"/>
</dbReference>
<dbReference type="SUPFAM" id="SSF52540">
    <property type="entry name" value="P-loop containing nucleoside triphosphate hydrolases"/>
    <property type="match status" value="1"/>
</dbReference>
<dbReference type="PROSITE" id="PS01331">
    <property type="entry name" value="THYMIDYLATE_KINASE"/>
    <property type="match status" value="1"/>
</dbReference>
<organism>
    <name type="scientific">Mesoplasma florum (strain ATCC 33453 / NBRC 100688 / NCTC 11704 / L1)</name>
    <name type="common">Acholeplasma florum</name>
    <dbReference type="NCBI Taxonomy" id="265311"/>
    <lineage>
        <taxon>Bacteria</taxon>
        <taxon>Bacillati</taxon>
        <taxon>Mycoplasmatota</taxon>
        <taxon>Mollicutes</taxon>
        <taxon>Entomoplasmatales</taxon>
        <taxon>Entomoplasmataceae</taxon>
        <taxon>Mesoplasma</taxon>
    </lineage>
</organism>
<proteinExistence type="inferred from homology"/>
<evidence type="ECO:0000255" key="1">
    <source>
        <dbReference type="HAMAP-Rule" id="MF_00165"/>
    </source>
</evidence>
<protein>
    <recommendedName>
        <fullName evidence="1">Thymidylate kinase</fullName>
        <ecNumber evidence="1">2.7.4.9</ecNumber>
    </recommendedName>
    <alternativeName>
        <fullName evidence="1">dTMP kinase</fullName>
    </alternativeName>
</protein>
<feature type="chain" id="PRO_0000155299" description="Thymidylate kinase">
    <location>
        <begin position="1"/>
        <end position="211"/>
    </location>
</feature>
<feature type="binding site" evidence="1">
    <location>
        <begin position="7"/>
        <end position="14"/>
    </location>
    <ligand>
        <name>ATP</name>
        <dbReference type="ChEBI" id="CHEBI:30616"/>
    </ligand>
</feature>
<sequence length="211" mass="24347">MFITIEGMDGSGKTTALQRVKQYLEDLNYKVVMTREPGGLPLSEKIRELILNKDGVGMEPWTEALLFIAARKEHLEKVIKPYLKKGYIVISDRFMDSTTAYQGGARGLGVDYLNELQKNILEGFLPDLTLYFELSFEDAEKRLSARPEEKNRLDEEGRKFKEAVKLAFEELVVKEPNRITVIDASKSPEEVFEETKKVILEKIELWKKEKR</sequence>
<gene>
    <name evidence="1" type="primary">tmk</name>
    <name type="ordered locus">Mfl676</name>
</gene>
<comment type="function">
    <text evidence="1">Phosphorylation of dTMP to form dTDP in both de novo and salvage pathways of dTTP synthesis.</text>
</comment>
<comment type="catalytic activity">
    <reaction evidence="1">
        <text>dTMP + ATP = dTDP + ADP</text>
        <dbReference type="Rhea" id="RHEA:13517"/>
        <dbReference type="ChEBI" id="CHEBI:30616"/>
        <dbReference type="ChEBI" id="CHEBI:58369"/>
        <dbReference type="ChEBI" id="CHEBI:63528"/>
        <dbReference type="ChEBI" id="CHEBI:456216"/>
        <dbReference type="EC" id="2.7.4.9"/>
    </reaction>
</comment>
<comment type="similarity">
    <text evidence="1">Belongs to the thymidylate kinase family.</text>
</comment>